<proteinExistence type="evidence at transcript level"/>
<organism>
    <name type="scientific">Xibalbanus tulumensis</name>
    <name type="common">Blind cave remipede</name>
    <name type="synonym">Speleonectes tulumensis</name>
    <dbReference type="NCBI Taxonomy" id="1519145"/>
    <lineage>
        <taxon>Eukaryota</taxon>
        <taxon>Metazoa</taxon>
        <taxon>Ecdysozoa</taxon>
        <taxon>Arthropoda</taxon>
        <taxon>Crustacea</taxon>
        <taxon>Remipedia</taxon>
        <taxon>Nectiopoda</taxon>
        <taxon>Speleonectidae</taxon>
        <taxon>Xibalbanus</taxon>
    </lineage>
</organism>
<evidence type="ECO:0000250" key="1">
    <source>
        <dbReference type="UniProtKB" id="B3EWH0"/>
    </source>
</evidence>
<evidence type="ECO:0000255" key="2"/>
<evidence type="ECO:0000269" key="3">
    <source>
    </source>
</evidence>
<evidence type="ECO:0000269" key="4">
    <source>
    </source>
</evidence>
<evidence type="ECO:0000303" key="5">
    <source>
    </source>
</evidence>
<evidence type="ECO:0000303" key="6">
    <source>
    </source>
</evidence>
<evidence type="ECO:0000305" key="7"/>
<evidence type="ECO:0000305" key="8">
    <source>
    </source>
</evidence>
<name>XIB1_XIBTU</name>
<accession>P0DRI6</accession>
<reference key="1">
    <citation type="journal article" date="2017" name="Toxins">
        <title>Venomics of remipede crustaceans reveals novel peptide diversity and illuminates the venom's biological role.</title>
        <authorList>
            <person name="von Reumont B.M."/>
            <person name="Undheim E.A.B."/>
            <person name="Jauss R.T."/>
            <person name="Jenner R.A."/>
        </authorList>
    </citation>
    <scope>NUCLEOTIDE SEQUENCE [LARGE SCALE MRNA]</scope>
    <scope>TISSUE SPECIFICITY</scope>
    <source>
        <tissue>Venom gland</tissue>
    </source>
</reference>
<reference key="2">
    <citation type="journal article" date="2024" name="BMC Biol.">
        <title>Diversely evolved xibalbin variants from remipede venom inhibit potassium channels and activate PKA-II and Erk1/2 signaling.</title>
        <authorList>
            <person name="Pinheiro-Junior E.L."/>
            <person name="Alirahimi E."/>
            <person name="Peigneur S."/>
            <person name="Isensee J."/>
            <person name="Schiffmann S."/>
            <person name="Erkoc P."/>
            <person name="Fuerst R."/>
            <person name="Vilcinskas A."/>
            <person name="Sennoner T."/>
            <person name="Koludarov I."/>
            <person name="Hempel B.F."/>
            <person name="Tytgat J."/>
            <person name="Hucho T."/>
            <person name="von Reumont B.M."/>
        </authorList>
    </citation>
    <scope>FUNCTION</scope>
    <scope>SYNTHESIS OF 64-120</scope>
</reference>
<sequence length="120" mass="13772">MISKILIAACALLLISHLVLAVPYLEDGLNSLHNRTGESDETRGYTIQLLKEMPEDDAVEDYSADNLERLLQNTQKRSCIRRFGRCDHRPNDCCYNSSCRCNLWGSNCRCQRMGLFQKWG</sequence>
<keyword id="KW-1015">Disulfide bond</keyword>
<keyword id="KW-0872">Ion channel impairing toxin</keyword>
<keyword id="KW-0960">Knottin</keyword>
<keyword id="KW-0528">Neurotoxin</keyword>
<keyword id="KW-0632">Potassium channel impairing toxin</keyword>
<keyword id="KW-0964">Secreted</keyword>
<keyword id="KW-0732">Signal</keyword>
<keyword id="KW-0800">Toxin</keyword>
<keyword id="KW-1220">Voltage-gated potassium channel impairing toxin</keyword>
<keyword id="KW-0738">Voltage-gated sodium channel impairing toxin</keyword>
<comment type="function">
    <text evidence="4">Probable neurotoxin. Strongly inhibits voltage-gated potassium channels (Kv1.1/KCNA1, Kv1.2/KCNA2, Kv1.3/KCNA3, and Kv1.6/KCNA6, with the highest toxicity against Kv1.6 (74% inhibition at 1 uM)) and mildly inhibits sodium channels (Nav1.2/SCN2A, Nav1.4/SCN4A, Nav1.5/SCN5A, Nav1.6/SCN8A, and BgNav). Induces activation of protein kinase A type II (PKA-II) and MAP kinase Erk1/2 in primary nociceptive and non-nociceptive sensory neurons. Does not show cytotoxic activity. Does not have an impact on Ca2+, cAMP, and NO signaling in the cell types analyzed. Does not interfere with the adhesion of leukocytes to endothelial cells.</text>
</comment>
<comment type="subcellular location">
    <subcellularLocation>
        <location evidence="8">Secreted</location>
    </subcellularLocation>
</comment>
<comment type="tissue specificity">
    <text evidence="3">Expressed by the venom gland. Not found in the whole body.</text>
</comment>
<comment type="domain">
    <text evidence="7">The presence of a 'disulfide through disulfide knot' structurally defines this protein as a knottin.</text>
</comment>
<comment type="miscellaneous">
    <text evidence="4">Negative results: Does not show activity on potassium channels Shaker, Kv1.4/KCNA4, Kv2.1/KCNB1, Kv3.1/KCNC1, Kv4.2/KCND2, Kv10.1/KCNH1/EAG1, Kv11.1/KCNH2/ERG1, and calcium channels Cav3.1/CACNA1G, Cav3.2/CACNA1H and Cav3.3/CACNA1I.</text>
</comment>
<comment type="similarity">
    <text evidence="7">Belongs to the xibalbin-1 family.</text>
</comment>
<comment type="online information" name="National Center for Biotechnology Information (NCBI)">
    <link uri="https://www.ncbi.nlm.nih.gov/sra/SRX2766574"/>
</comment>
<gene>
    <name evidence="6" type="ORF">c29168_g1_i1_0</name>
</gene>
<feature type="signal peptide" evidence="2">
    <location>
        <begin position="1"/>
        <end position="21"/>
    </location>
</feature>
<feature type="propeptide" id="PRO_0000462231" evidence="8">
    <location>
        <begin position="22"/>
        <end position="63"/>
    </location>
</feature>
<feature type="chain" id="PRO_0000462232" description="Xibalbin-1" evidence="8">
    <location>
        <begin position="64"/>
        <end position="120"/>
    </location>
</feature>
<feature type="disulfide bond" evidence="1">
    <location>
        <begin position="79"/>
        <end position="94"/>
    </location>
</feature>
<feature type="disulfide bond" evidence="1">
    <location>
        <begin position="86"/>
        <end position="99"/>
    </location>
</feature>
<feature type="disulfide bond" evidence="1">
    <location>
        <begin position="93"/>
        <end position="110"/>
    </location>
</feature>
<feature type="disulfide bond" evidence="1">
    <location>
        <begin position="101"/>
        <end position="108"/>
    </location>
</feature>
<protein>
    <recommendedName>
        <fullName evidence="5 6">Xibalbin-1</fullName>
        <shortName evidence="6">Xib1</shortName>
    </recommendedName>
    <alternativeName>
        <fullName evidence="7">Kappa-speleotoxin(1)-Xt1a</fullName>
        <shortName evidence="7">Kappa-SLTX(1)-Xt1a</shortName>
    </alternativeName>
</protein>